<feature type="signal peptide" evidence="2">
    <location>
        <begin position="1"/>
        <end position="22"/>
    </location>
</feature>
<feature type="chain" id="PRO_5000371839" description="Pectinesterase 2">
    <location>
        <begin position="23"/>
        <end position="364"/>
    </location>
</feature>
<feature type="active site" evidence="3">
    <location>
        <position position="220"/>
    </location>
</feature>
<feature type="glycosylation site" description="N-linked (GlcNAc...) asparagine" evidence="4">
    <location>
        <position position="103"/>
    </location>
</feature>
<sequence>MSCIAVEAVLLGILLYIPIVLSDDRAPIPANSAQLNSWFDGIIQPVAVRKATMDPALVTAEGQAKVIKLKSDGSGDFKSINEAIKSIPDDNTKRVILSFSPGNYSEKVKIGMYKHYITFYGEDPNNMPILVFGGTAAEYGTVDSATLIVESNYFSAVNLKIVNSAPRPDGKRVGAQAAALRISGDKASFYNVKIYGFQDTLCDDKGKHFYKDCYIEGTVDFIFGSGKSIFLNTELHAVPGDQPAIITAQARKTESEDTGYYFVNCRVTGGGAFLGRSWMPAAKVVFAYTEMGDAIHPEGWILVKPEHESTVRFPEYNNKGPGANMEKRAKFVKRLSDAEAKQSISLGSIEASKWLLPPRVVGLP</sequence>
<comment type="function">
    <text evidence="1">Catalyzes the demethylesterification of homogalacturonan components of pectin. May be involved in pollen tube development (By similarity).</text>
</comment>
<comment type="catalytic activity">
    <reaction>
        <text>[(1-&gt;4)-alpha-D-galacturonosyl methyl ester](n) + n H2O = [(1-&gt;4)-alpha-D-galacturonosyl](n) + n methanol + n H(+)</text>
        <dbReference type="Rhea" id="RHEA:22380"/>
        <dbReference type="Rhea" id="RHEA-COMP:14570"/>
        <dbReference type="Rhea" id="RHEA-COMP:14573"/>
        <dbReference type="ChEBI" id="CHEBI:15377"/>
        <dbReference type="ChEBI" id="CHEBI:15378"/>
        <dbReference type="ChEBI" id="CHEBI:17790"/>
        <dbReference type="ChEBI" id="CHEBI:140522"/>
        <dbReference type="ChEBI" id="CHEBI:140523"/>
        <dbReference type="EC" id="3.1.1.11"/>
    </reaction>
</comment>
<comment type="pathway">
    <text>Glycan metabolism; pectin degradation; 2-dehydro-3-deoxy-D-gluconate from pectin: step 1/5.</text>
</comment>
<comment type="subcellular location">
    <subcellularLocation>
        <location evidence="5">Secreted</location>
    </subcellularLocation>
</comment>
<comment type="tissue specificity">
    <text evidence="4">Expressed in pollen.</text>
</comment>
<comment type="PTM">
    <text evidence="4">Glycosylated.</text>
</comment>
<comment type="polymorphism">
    <text>Several isoforms of the allergen exist due to polymorphism.</text>
</comment>
<comment type="allergen">
    <text>Causes an allergic reaction in human. Allergen from olive pollen. Important in Mediterranean countries and California. Its prevalence is related to the geographic area.</text>
</comment>
<comment type="similarity">
    <text evidence="5">Belongs to the pectinesterase family.</text>
</comment>
<keyword id="KW-0020">Allergen</keyword>
<keyword id="KW-0063">Aspartyl esterase</keyword>
<keyword id="KW-0903">Direct protein sequencing</keyword>
<keyword id="KW-0325">Glycoprotein</keyword>
<keyword id="KW-0378">Hydrolase</keyword>
<keyword id="KW-0964">Secreted</keyword>
<keyword id="KW-0732">Signal</keyword>
<accession>B2VPR8</accession>
<proteinExistence type="evidence at protein level"/>
<dbReference type="EC" id="3.1.1.11"/>
<dbReference type="EMBL" id="DQ026502">
    <property type="protein sequence ID" value="AAY88919.1"/>
    <property type="molecule type" value="mRNA"/>
</dbReference>
<dbReference type="SMR" id="B2VPR8"/>
<dbReference type="Allergome" id="5966">
    <property type="allergen name" value="Ole e 11"/>
</dbReference>
<dbReference type="Allergome" id="8780">
    <property type="allergen name" value="Ole e 11.0102"/>
</dbReference>
<dbReference type="iPTMnet" id="B2VPR8"/>
<dbReference type="BRENDA" id="3.1.1.11">
    <property type="organism ID" value="4398"/>
</dbReference>
<dbReference type="UniPathway" id="UPA00545">
    <property type="reaction ID" value="UER00823"/>
</dbReference>
<dbReference type="GO" id="GO:0005576">
    <property type="term" value="C:extracellular region"/>
    <property type="evidence" value="ECO:0007669"/>
    <property type="project" value="UniProtKB-SubCell"/>
</dbReference>
<dbReference type="GO" id="GO:0030599">
    <property type="term" value="F:pectinesterase activity"/>
    <property type="evidence" value="ECO:0007669"/>
    <property type="project" value="UniProtKB-EC"/>
</dbReference>
<dbReference type="GO" id="GO:0042545">
    <property type="term" value="P:cell wall modification"/>
    <property type="evidence" value="ECO:0007669"/>
    <property type="project" value="InterPro"/>
</dbReference>
<dbReference type="GO" id="GO:0045490">
    <property type="term" value="P:pectin catabolic process"/>
    <property type="evidence" value="ECO:0007669"/>
    <property type="project" value="UniProtKB-UniPathway"/>
</dbReference>
<dbReference type="Gene3D" id="2.160.20.10">
    <property type="entry name" value="Single-stranded right-handed beta-helix, Pectin lyase-like"/>
    <property type="match status" value="1"/>
</dbReference>
<dbReference type="InterPro" id="IPR012334">
    <property type="entry name" value="Pectin_lyas_fold"/>
</dbReference>
<dbReference type="InterPro" id="IPR011050">
    <property type="entry name" value="Pectin_lyase_fold/virulence"/>
</dbReference>
<dbReference type="InterPro" id="IPR033131">
    <property type="entry name" value="Pectinesterase_Asp_AS"/>
</dbReference>
<dbReference type="InterPro" id="IPR000070">
    <property type="entry name" value="Pectinesterase_cat"/>
</dbReference>
<dbReference type="PANTHER" id="PTHR31321">
    <property type="entry name" value="ACYL-COA THIOESTER HYDROLASE YBHC-RELATED"/>
    <property type="match status" value="1"/>
</dbReference>
<dbReference type="PANTHER" id="PTHR31321:SF87">
    <property type="entry name" value="PECTINESTERASE 63-RELATED"/>
    <property type="match status" value="1"/>
</dbReference>
<dbReference type="Pfam" id="PF01095">
    <property type="entry name" value="Pectinesterase"/>
    <property type="match status" value="1"/>
</dbReference>
<dbReference type="SUPFAM" id="SSF51126">
    <property type="entry name" value="Pectin lyase-like"/>
    <property type="match status" value="1"/>
</dbReference>
<dbReference type="PROSITE" id="PS00503">
    <property type="entry name" value="PECTINESTERASE_2"/>
    <property type="match status" value="1"/>
</dbReference>
<name>AL11B_OLEEU</name>
<organism>
    <name type="scientific">Olea europaea</name>
    <name type="common">Common olive</name>
    <dbReference type="NCBI Taxonomy" id="4146"/>
    <lineage>
        <taxon>Eukaryota</taxon>
        <taxon>Viridiplantae</taxon>
        <taxon>Streptophyta</taxon>
        <taxon>Embryophyta</taxon>
        <taxon>Tracheophyta</taxon>
        <taxon>Spermatophyta</taxon>
        <taxon>Magnoliopsida</taxon>
        <taxon>eudicotyledons</taxon>
        <taxon>Gunneridae</taxon>
        <taxon>Pentapetalae</taxon>
        <taxon>asterids</taxon>
        <taxon>lamiids</taxon>
        <taxon>Lamiales</taxon>
        <taxon>Oleaceae</taxon>
        <taxon>Oleeae</taxon>
        <taxon>Olea</taxon>
    </lineage>
</organism>
<evidence type="ECO:0000250" key="1"/>
<evidence type="ECO:0000255" key="2"/>
<evidence type="ECO:0000255" key="3">
    <source>
        <dbReference type="PROSITE-ProRule" id="PRU10040"/>
    </source>
</evidence>
<evidence type="ECO:0000269" key="4">
    <source>
    </source>
</evidence>
<evidence type="ECO:0000305" key="5"/>
<protein>
    <recommendedName>
        <fullName>Pectinesterase 2</fullName>
        <ecNumber>3.1.1.11</ecNumber>
    </recommendedName>
    <alternativeName>
        <fullName>Pollen allergen Ole e 11.0102</fullName>
        <shortName>Ole e 11-2</shortName>
    </alternativeName>
    <allergenName>Ole e 11.0102</allergenName>
</protein>
<reference key="1">
    <citation type="journal article" date="2010" name="FEBS J.">
        <title>Pectin methylesterases of pollen tissue, a major allergen in olive tree.</title>
        <authorList>
            <person name="Salamanca G."/>
            <person name="Rodriguez R."/>
            <person name="Quiralte J."/>
            <person name="Moreno C."/>
            <person name="Pascual C.Y."/>
            <person name="Barber D."/>
            <person name="Villalba M."/>
        </authorList>
    </citation>
    <scope>NUCLEOTIDE SEQUENCE [MRNA]</scope>
    <scope>PROTEIN SEQUENCE OF 23-32; 252-276 AND 354-359</scope>
    <scope>GLYCOSYLATION AT ASN-103</scope>
    <scope>3D-STRUCTURE MODELING</scope>
    <scope>TISSUE SPECIFICITY</scope>
    <source>
        <tissue>Pollen</tissue>
    </source>
</reference>
<reference key="2">
    <citation type="journal article" date="2012" name="J. Mol. Model.">
        <title>Structure and functional features of olive pollen pectin methylesterase using homology modeling and molecular docking methods.</title>
        <authorList>
            <person name="Jimenez-Lopez J.C."/>
            <person name="Kotchoni S.O."/>
            <person name="Rodriguez-Garcia M.I."/>
            <person name="Alche J.D."/>
        </authorList>
    </citation>
    <scope>3D-STRUCTURE MODELING</scope>
</reference>
<reference key="3">
    <citation type="journal article" date="2012" name="Talanta">
        <title>Analysis of olive allergens.</title>
        <authorList>
            <person name="Esteve C."/>
            <person name="Montealegre C."/>
            <person name="Marina M.L."/>
            <person name="Garcia M.C."/>
        </authorList>
    </citation>
    <scope>REVIEW</scope>
    <scope>NOMENCLATURE</scope>
</reference>